<comment type="function">
    <text evidence="4 5 7">Aerial growth, conidiation, and dispersal of filamentous fungi in the environment rely upon a capability of their secreting small amphipathic proteins called hydrophobins (HPBs) with low sequence identity. Class I can self-assemble into an outermost layer of rodlet bundles on aerial cell surfaces, conferring cellular hydrophobicity that supports fungal growth, development and dispersal; whereas Class II form highly ordered films at water-air interfaces through intermolecular interactions but contribute nothing to the rodlet structure (Probable). Atypical class I hydrophobin that is preceded by a signal sequence and 17 imperfect repeats. The repeated peptides might function as repellents whereas the class I hydrophobin seems not to be crucial for the formation of aerial hyphae (PubMed:17159213). Hydrophobins of Mycosarcoma maydis have been functionally replaced, at least partially, by repellents (PubMed:17159213). Hum3 and rsp1 together are pathogenicity proteins that share an essential function in early stages of the infection (PubMed:17917743).</text>
</comment>
<comment type="subunit">
    <text evidence="1">Self-assembles to form functional amyloid fibrils called rodlets. Self-assembly into fibrillar rodlets occurs spontaneously at hydrophobic:hydrophilic interfaces and the rodlets further associate laterally to form amphipathic monolayers.</text>
</comment>
<comment type="subcellular location">
    <subcellularLocation>
        <location evidence="5">Secreted</location>
    </subcellularLocation>
    <subcellularLocation>
        <location evidence="5">Secreted</location>
        <location evidence="5">Cell wall</location>
    </subcellularLocation>
</comment>
<comment type="PTM">
    <text evidence="5">Hum3 is an atypical hydrophobin that consists in a repetitive repellent-like region that spans 578 aa which is separated from a hydrophobin-like domain by a spacer region containing three possible kex2 processing sites. The repetitive region contains 17 amphipathic repeats of 31-36 aa each of them with a C-terminal putative kex2 processing motif.</text>
</comment>
<comment type="disruption phenotype">
    <text evidence="4 5">Does not significantly affect surface hydrophobicity (PubMed:17159213, PubMed:17917743). Leads to complete loss of pathogenicity when rsp1 is also deleted (PubMed:17917743).</text>
</comment>
<comment type="miscellaneous">
    <text evidence="4">Filamentous ascomycetes and basidiomycetes generally contain multiple hydrophobin genes. In contrast, hydrophobin genes are absent in the genomes of the yeasts Cryptococcus neoformans, Saccharomyces cerevisiae, Schizosaccharomyces pombe, Kluyveromyces lactis and Yarrowia lipolytica, and the dimorphic fungus Candida albicans. These organisms have probably lost their hydrophobin genes during evolution. Mycosarcoma maydis does have hydrophobin genes but the encoded proteins have been functionally replaced, at least partially, by the repellents. Mycosarcoma maydis thus seems to be in between the filamentous fungi and the yeasts with respect to the role of hydrophobins in the life cycle.</text>
</comment>
<comment type="similarity">
    <text evidence="7">In the C-terminal section; belongs to the fungal hydrophobin family.</text>
</comment>
<protein>
    <recommendedName>
        <fullName evidence="6">Class I hydrophobin hum3</fullName>
    </recommendedName>
    <component>
        <recommendedName>
            <fullName>Repeat-1</fullName>
        </recommendedName>
    </component>
    <component>
        <recommendedName>
            <fullName>Repeat-2</fullName>
        </recommendedName>
    </component>
    <component>
        <recommendedName>
            <fullName>Repeat-3</fullName>
        </recommendedName>
    </component>
    <component>
        <recommendedName>
            <fullName>Repeat-4</fullName>
        </recommendedName>
    </component>
    <component>
        <recommendedName>
            <fullName>Repeat-5</fullName>
        </recommendedName>
    </component>
    <component>
        <recommendedName>
            <fullName>Repeat-6</fullName>
        </recommendedName>
    </component>
    <component>
        <recommendedName>
            <fullName>Repeat-7</fullName>
        </recommendedName>
    </component>
    <component>
        <recommendedName>
            <fullName>Repeat-8</fullName>
        </recommendedName>
    </component>
    <component>
        <recommendedName>
            <fullName>Repeat-9</fullName>
        </recommendedName>
    </component>
    <component>
        <recommendedName>
            <fullName>Repeat-10</fullName>
        </recommendedName>
    </component>
    <component>
        <recommendedName>
            <fullName>Repeat-11</fullName>
        </recommendedName>
    </component>
    <component>
        <recommendedName>
            <fullName>Repeat-12</fullName>
        </recommendedName>
    </component>
    <component>
        <recommendedName>
            <fullName>Repeat-13</fullName>
        </recommendedName>
    </component>
    <component>
        <recommendedName>
            <fullName>Repeat-14</fullName>
        </recommendedName>
    </component>
    <component>
        <recommendedName>
            <fullName>Repeat-15</fullName>
        </recommendedName>
    </component>
    <component>
        <recommendedName>
            <fullName>Repeat-16</fullName>
        </recommendedName>
    </component>
    <component>
        <recommendedName>
            <fullName>Repeat-17</fullName>
        </recommendedName>
    </component>
    <component>
        <recommendedName>
            <fullName>Linker peptide</fullName>
        </recommendedName>
    </component>
    <component>
        <recommendedName>
            <fullName>Hydrophobin 3</fullName>
        </recommendedName>
    </component>
</protein>
<keyword id="KW-0134">Cell wall</keyword>
<keyword id="KW-0961">Cell wall biogenesis/degradation</keyword>
<keyword id="KW-0165">Cleavage on pair of basic residues</keyword>
<keyword id="KW-1015">Disulfide bond</keyword>
<keyword id="KW-0325">Glycoprotein</keyword>
<keyword id="KW-1185">Reference proteome</keyword>
<keyword id="KW-0964">Secreted</keyword>
<keyword id="KW-0732">Signal</keyword>
<evidence type="ECO:0000250" key="1">
    <source>
        <dbReference type="UniProtKB" id="Q04571"/>
    </source>
</evidence>
<evidence type="ECO:0000255" key="2"/>
<evidence type="ECO:0000255" key="3">
    <source>
        <dbReference type="PROSITE-ProRule" id="PRU00498"/>
    </source>
</evidence>
<evidence type="ECO:0000269" key="4">
    <source>
    </source>
</evidence>
<evidence type="ECO:0000269" key="5">
    <source>
    </source>
</evidence>
<evidence type="ECO:0000303" key="6">
    <source>
    </source>
</evidence>
<evidence type="ECO:0000305" key="7"/>
<gene>
    <name evidence="6" type="primary">him3</name>
    <name type="ORF">UMAG_04433</name>
</gene>
<reference key="1">
    <citation type="journal article" date="2006" name="Nature">
        <title>Insights from the genome of the biotrophic fungal plant pathogen Ustilago maydis.</title>
        <authorList>
            <person name="Kaemper J."/>
            <person name="Kahmann R."/>
            <person name="Boelker M."/>
            <person name="Ma L.-J."/>
            <person name="Brefort T."/>
            <person name="Saville B.J."/>
            <person name="Banuett F."/>
            <person name="Kronstad J.W."/>
            <person name="Gold S.E."/>
            <person name="Mueller O."/>
            <person name="Perlin M.H."/>
            <person name="Woesten H.A.B."/>
            <person name="de Vries R."/>
            <person name="Ruiz-Herrera J."/>
            <person name="Reynaga-Pena C.G."/>
            <person name="Snetselaar K."/>
            <person name="McCann M."/>
            <person name="Perez-Martin J."/>
            <person name="Feldbruegge M."/>
            <person name="Basse C.W."/>
            <person name="Steinberg G."/>
            <person name="Ibeas J.I."/>
            <person name="Holloman W."/>
            <person name="Guzman P."/>
            <person name="Farman M.L."/>
            <person name="Stajich J.E."/>
            <person name="Sentandreu R."/>
            <person name="Gonzalez-Prieto J.M."/>
            <person name="Kennell J.C."/>
            <person name="Molina L."/>
            <person name="Schirawski J."/>
            <person name="Mendoza-Mendoza A."/>
            <person name="Greilinger D."/>
            <person name="Muench K."/>
            <person name="Roessel N."/>
            <person name="Scherer M."/>
            <person name="Vranes M."/>
            <person name="Ladendorf O."/>
            <person name="Vincon V."/>
            <person name="Fuchs U."/>
            <person name="Sandrock B."/>
            <person name="Meng S."/>
            <person name="Ho E.C.H."/>
            <person name="Cahill M.J."/>
            <person name="Boyce K.J."/>
            <person name="Klose J."/>
            <person name="Klosterman S.J."/>
            <person name="Deelstra H.J."/>
            <person name="Ortiz-Castellanos L."/>
            <person name="Li W."/>
            <person name="Sanchez-Alonso P."/>
            <person name="Schreier P.H."/>
            <person name="Haeuser-Hahn I."/>
            <person name="Vaupel M."/>
            <person name="Koopmann E."/>
            <person name="Friedrich G."/>
            <person name="Voss H."/>
            <person name="Schlueter T."/>
            <person name="Margolis J."/>
            <person name="Platt D."/>
            <person name="Swimmer C."/>
            <person name="Gnirke A."/>
            <person name="Chen F."/>
            <person name="Vysotskaia V."/>
            <person name="Mannhaupt G."/>
            <person name="Gueldener U."/>
            <person name="Muensterkoetter M."/>
            <person name="Haase D."/>
            <person name="Oesterheld M."/>
            <person name="Mewes H.-W."/>
            <person name="Mauceli E.W."/>
            <person name="DeCaprio D."/>
            <person name="Wade C.M."/>
            <person name="Butler J."/>
            <person name="Young S.K."/>
            <person name="Jaffe D.B."/>
            <person name="Calvo S.E."/>
            <person name="Nusbaum C."/>
            <person name="Galagan J.E."/>
            <person name="Birren B.W."/>
        </authorList>
    </citation>
    <scope>NUCLEOTIDE SEQUENCE [LARGE SCALE GENOMIC DNA]</scope>
    <source>
        <strain>DSM 14603 / FGSC 9021 / UM521</strain>
    </source>
</reference>
<reference key="2">
    <citation type="submission" date="2014-09" db="EMBL/GenBank/DDBJ databases">
        <authorList>
            <person name="Gueldener U."/>
            <person name="Muensterkoetter M."/>
            <person name="Walter M.C."/>
            <person name="Mannhaupt G."/>
            <person name="Kahmann R."/>
        </authorList>
    </citation>
    <scope>GENOME REANNOTATION</scope>
    <source>
        <strain>DSM 14603 / FGSC 9021 / UM521</strain>
    </source>
</reference>
<reference key="3">
    <citation type="journal article" date="2006" name="Microbiology">
        <title>Repellents have functionally replaced hydrophobins in mediating attachment to a hydrophobic surface and in formation of hydrophobic aerial hyphae in Ustilago maydis.</title>
        <authorList>
            <person name="Teertstra W.R."/>
            <person name="Deelstra H.J."/>
            <person name="Vranes M."/>
            <person name="Bohlmann R."/>
            <person name="Kahmann R."/>
            <person name="Kaemper J."/>
            <person name="Woesten H.A.B."/>
        </authorList>
    </citation>
    <scope>FUNCTION</scope>
    <scope>DISRUPTION PHENOTYPE</scope>
</reference>
<reference key="4">
    <citation type="journal article" date="2008" name="Mol. Genet. Genomics">
        <title>Identification and characterization of secreted and pathogenesis-related proteins in Ustilago maydis.</title>
        <authorList>
            <person name="Mueller O."/>
            <person name="Schreier P.H."/>
            <person name="Uhrig J.F."/>
        </authorList>
    </citation>
    <scope>FUNCTION</scope>
    <scope>SUBCELLULAR LOCATION</scope>
    <scope>CLEAVAGE BY KEX2</scope>
</reference>
<accession>A0A0D1CKI0</accession>
<proteinExistence type="evidence at protein level"/>
<dbReference type="EMBL" id="CM003153">
    <property type="protein sequence ID" value="KIS67333.1"/>
    <property type="molecule type" value="Genomic_DNA"/>
</dbReference>
<dbReference type="RefSeq" id="XP_011391123.1">
    <property type="nucleotide sequence ID" value="XM_011392821.1"/>
</dbReference>
<dbReference type="EnsemblFungi" id="KIS67333">
    <property type="protein sequence ID" value="KIS67333"/>
    <property type="gene ID" value="UMAG_04433"/>
</dbReference>
<dbReference type="GeneID" id="23564622"/>
<dbReference type="KEGG" id="uma:UMAG_04433"/>
<dbReference type="VEuPathDB" id="FungiDB:UMAG_04433"/>
<dbReference type="eggNOG" id="ENOG502SEFN">
    <property type="taxonomic scope" value="Eukaryota"/>
</dbReference>
<dbReference type="InParanoid" id="A0A0D1CKI0"/>
<dbReference type="OMA" id="ENHNQVL"/>
<dbReference type="OrthoDB" id="4225815at2759"/>
<dbReference type="Proteomes" id="UP000000561">
    <property type="component" value="Chromosome 14"/>
</dbReference>
<dbReference type="GO" id="GO:0009277">
    <property type="term" value="C:fungal-type cell wall"/>
    <property type="evidence" value="ECO:0007669"/>
    <property type="project" value="InterPro"/>
</dbReference>
<dbReference type="GO" id="GO:0005199">
    <property type="term" value="F:structural constituent of cell wall"/>
    <property type="evidence" value="ECO:0007669"/>
    <property type="project" value="InterPro"/>
</dbReference>
<dbReference type="CDD" id="cd23507">
    <property type="entry name" value="hydrophobin_I"/>
    <property type="match status" value="1"/>
</dbReference>
<dbReference type="InterPro" id="IPR001338">
    <property type="entry name" value="Hydrophobin"/>
</dbReference>
<dbReference type="Pfam" id="PF01185">
    <property type="entry name" value="Hydrophobin"/>
    <property type="match status" value="1"/>
</dbReference>
<dbReference type="SMART" id="SM00075">
    <property type="entry name" value="HYDRO"/>
    <property type="match status" value="1"/>
</dbReference>
<feature type="signal peptide" evidence="2">
    <location>
        <begin position="1"/>
        <end position="22"/>
    </location>
</feature>
<feature type="chain" id="PRO_5002228782" description="Class I hydrophobin hum3">
    <location>
        <begin position="23"/>
        <end position="828"/>
    </location>
</feature>
<feature type="peptide" id="PRO_0000462414" description="Repeat-1" evidence="4 5">
    <location>
        <begin position="23"/>
        <end position="53"/>
    </location>
</feature>
<feature type="peptide" id="PRO_0000462415" description="Repeat-2" evidence="4 5">
    <location>
        <begin position="54"/>
        <end position="85"/>
    </location>
</feature>
<feature type="peptide" id="PRO_0000462416" description="Repeat-3" evidence="4 5">
    <location>
        <begin position="86"/>
        <end position="117"/>
    </location>
</feature>
<feature type="peptide" id="PRO_0000462417" description="Repeat-4" evidence="4 5">
    <location>
        <begin position="118"/>
        <end position="150"/>
    </location>
</feature>
<feature type="peptide" id="PRO_0000462418" description="Repeat-5" evidence="4 5">
    <location>
        <begin position="151"/>
        <end position="182"/>
    </location>
</feature>
<feature type="peptide" id="PRO_0000462419" description="Repeat-6" evidence="4 5">
    <location>
        <begin position="183"/>
        <end position="216"/>
    </location>
</feature>
<feature type="peptide" id="PRO_0000462420" description="Repeat-7" evidence="4 5">
    <location>
        <begin position="217"/>
        <end position="248"/>
    </location>
</feature>
<feature type="peptide" id="PRO_0000462421" description="Repeat-8" evidence="4 5">
    <location>
        <begin position="249"/>
        <end position="284"/>
    </location>
</feature>
<feature type="peptide" id="PRO_0000462422" description="Repeat-9" evidence="4 5">
    <location>
        <begin position="285"/>
        <end position="320"/>
    </location>
</feature>
<feature type="peptide" id="PRO_0000462423" description="Repeat-10" evidence="4 5">
    <location>
        <begin position="321"/>
        <end position="356"/>
    </location>
</feature>
<feature type="peptide" id="PRO_0000462424" description="Repeat-11" evidence="4 5">
    <location>
        <begin position="357"/>
        <end position="392"/>
    </location>
</feature>
<feature type="peptide" id="PRO_0000462425" description="Repeat-12" evidence="4 5">
    <location>
        <begin position="393"/>
        <end position="427"/>
    </location>
</feature>
<feature type="peptide" id="PRO_0000462426" description="Repeat-13" evidence="4 5">
    <location>
        <begin position="428"/>
        <end position="463"/>
    </location>
</feature>
<feature type="peptide" id="PRO_0000462427" description="Repeat-14" evidence="4 5">
    <location>
        <begin position="464"/>
        <end position="499"/>
    </location>
</feature>
<feature type="peptide" id="PRO_0000462428" description="Repeat-15" evidence="4 5">
    <location>
        <begin position="500"/>
        <end position="534"/>
    </location>
</feature>
<feature type="peptide" id="PRO_0000462429" description="Repeat-16" evidence="4 5">
    <location>
        <begin position="535"/>
        <end position="565"/>
    </location>
</feature>
<feature type="peptide" id="PRO_0000462430" description="Repeat-17" evidence="4 5">
    <location>
        <begin position="566"/>
        <end position="598"/>
    </location>
</feature>
<feature type="peptide" id="PRO_0000462431" description="Linker peptide" evidence="4 5">
    <location>
        <begin position="705"/>
        <end position="711"/>
    </location>
</feature>
<feature type="peptide" id="PRO_0000462432" description="Hydrophobin 3" evidence="4 5">
    <location>
        <begin position="712"/>
        <end position="828"/>
    </location>
</feature>
<feature type="glycosylation site" description="N-linked (GlcNAc...) asparagine" evidence="3">
    <location>
        <position position="156"/>
    </location>
</feature>
<feature type="glycosylation site" description="N-linked (GlcNAc...) asparagine" evidence="3">
    <location>
        <position position="222"/>
    </location>
</feature>
<feature type="glycosylation site" description="N-linked (GlcNAc...) asparagine" evidence="3">
    <location>
        <position position="738"/>
    </location>
</feature>
<feature type="glycosylation site" description="N-linked (GlcNAc...) asparagine" evidence="3">
    <location>
        <position position="811"/>
    </location>
</feature>
<feature type="disulfide bond" evidence="1">
    <location>
        <begin position="750"/>
        <end position="808"/>
    </location>
</feature>
<feature type="disulfide bond" evidence="1">
    <location>
        <begin position="757"/>
        <end position="802"/>
    </location>
</feature>
<feature type="disulfide bond" evidence="1">
    <location>
        <begin position="758"/>
        <end position="788"/>
    </location>
</feature>
<feature type="disulfide bond" evidence="1">
    <location>
        <begin position="809"/>
        <end position="822"/>
    </location>
</feature>
<name>HUM3_MYCMD</name>
<sequence length="828" mass="87229">MKYLQFLAAVAAVSAFSGPVLAGSSVENTNQVLPVQLTGALFSQVANGQHAERAIKVDNSAQFVPVQGTIAALSAVLNEQKAGKRSFSVENTNQVLPIDVIIAGLSQVLTEQKAAKRDNIVKNTNQILPIEATIAALSAIANGQKAATKRSTAVDNSSQFIPIQGTLAAFSNVLNSQKATKRNTGKVVDNTNQVVPIQGTLAALSTVLNEQKASKRGVDVDNSSQTLPIEATIAALSTIANGQQAGKRNAPDFDVVKNSNQVLPIQATAALLSQIANGQSVEKRNAPDFDVVKNSNQVLPIQATAALLSQIANGQSVEKRNAPDFDVVKNSNQVLPIQATAALLSQIANGQSVEKRNAPDFDVVKNSNQVLPIQATAALLSQIANGQSVEKRNAPDFDSVKNSNQVVPIQATAALLSAVKNLQSVERNAPDFDSVKNSNQVVPIQATAALLSQIANGQSVEKRNAPDFDSVKNSNQVVPIQGTAALLSVVGNGQSVSKRHEGENNIVDNTNQVIPIQATIAALSTLLNSQKAERSYSVDNTNQVLPIEATLAAFSSVLNSQKAERSYSVENDNEVVPVDLVAAALSQVANGQKVTRRGETKESIKHNVNQVAPAQASLSALSDIVNSAHSRRAMDVKQYETLQYAINALQQALDKTNTGDKTHHVDAMTGTAEHFDERDAGLDPAAFLGSAASGISVPVGNKDLLKSLVKRYAAEEDEAMAKRTPSLNGRGQRPRPRNSSSSEHNNNGQCSVGEAKCCSQVITDEGKKKTLAGLLGFNNLVGDIGLNCQQIPVLGVSLQSICKATPVCCTNVSQDGLVNVGCTSIPIN</sequence>
<organism>
    <name type="scientific">Mycosarcoma maydis</name>
    <name type="common">Corn smut fungus</name>
    <name type="synonym">Ustilago maydis</name>
    <dbReference type="NCBI Taxonomy" id="5270"/>
    <lineage>
        <taxon>Eukaryota</taxon>
        <taxon>Fungi</taxon>
        <taxon>Dikarya</taxon>
        <taxon>Basidiomycota</taxon>
        <taxon>Ustilaginomycotina</taxon>
        <taxon>Ustilaginomycetes</taxon>
        <taxon>Ustilaginales</taxon>
        <taxon>Ustilaginaceae</taxon>
        <taxon>Mycosarcoma</taxon>
    </lineage>
</organism>